<name>RBL2_CERS5</name>
<geneLocation type="plasmid">
    <name>pRSPA02</name>
</geneLocation>
<feature type="chain" id="PRO_0000355753" description="Ribulose bisphosphate carboxylase large chain 2">
    <location>
        <begin position="1"/>
        <end position="473"/>
    </location>
</feature>
<feature type="active site" description="Proton acceptor" evidence="1">
    <location>
        <position position="168"/>
    </location>
</feature>
<feature type="active site" description="Proton acceptor" evidence="1">
    <location>
        <position position="287"/>
    </location>
</feature>
<feature type="binding site" description="in homodimeric partner" evidence="1">
    <location>
        <position position="116"/>
    </location>
    <ligand>
        <name>substrate</name>
    </ligand>
</feature>
<feature type="binding site" evidence="1">
    <location>
        <position position="166"/>
    </location>
    <ligand>
        <name>substrate</name>
    </ligand>
</feature>
<feature type="binding site" evidence="1">
    <location>
        <position position="170"/>
    </location>
    <ligand>
        <name>substrate</name>
    </ligand>
</feature>
<feature type="binding site" description="via carbamate group" evidence="1">
    <location>
        <position position="194"/>
    </location>
    <ligand>
        <name>Mg(2+)</name>
        <dbReference type="ChEBI" id="CHEBI:18420"/>
    </ligand>
</feature>
<feature type="binding site" evidence="1">
    <location>
        <position position="196"/>
    </location>
    <ligand>
        <name>Mg(2+)</name>
        <dbReference type="ChEBI" id="CHEBI:18420"/>
    </ligand>
</feature>
<feature type="binding site" evidence="1">
    <location>
        <position position="197"/>
    </location>
    <ligand>
        <name>Mg(2+)</name>
        <dbReference type="ChEBI" id="CHEBI:18420"/>
    </ligand>
</feature>
<feature type="binding site" evidence="1">
    <location>
        <position position="288"/>
    </location>
    <ligand>
        <name>substrate</name>
    </ligand>
</feature>
<feature type="binding site" evidence="1">
    <location>
        <position position="320"/>
    </location>
    <ligand>
        <name>substrate</name>
    </ligand>
</feature>
<feature type="binding site" evidence="1">
    <location>
        <position position="372"/>
    </location>
    <ligand>
        <name>substrate</name>
    </ligand>
</feature>
<feature type="site" description="Transition state stabilizer" evidence="1">
    <location>
        <position position="327"/>
    </location>
</feature>
<feature type="modified residue" description="N6-carboxylysine" evidence="1">
    <location>
        <position position="194"/>
    </location>
</feature>
<reference key="1">
    <citation type="submission" date="2007-04" db="EMBL/GenBank/DDBJ databases">
        <title>Complete sequence of plasmid pRSPA02 of Rhodobacter sphaeroides ATCC 17025.</title>
        <authorList>
            <consortium name="US DOE Joint Genome Institute"/>
            <person name="Copeland A."/>
            <person name="Lucas S."/>
            <person name="Lapidus A."/>
            <person name="Barry K."/>
            <person name="Detter J.C."/>
            <person name="Glavina del Rio T."/>
            <person name="Hammon N."/>
            <person name="Israni S."/>
            <person name="Dalin E."/>
            <person name="Tice H."/>
            <person name="Pitluck S."/>
            <person name="Chertkov O."/>
            <person name="Brettin T."/>
            <person name="Bruce D."/>
            <person name="Han C."/>
            <person name="Schmutz J."/>
            <person name="Larimer F."/>
            <person name="Land M."/>
            <person name="Hauser L."/>
            <person name="Kyrpides N."/>
            <person name="Kim E."/>
            <person name="Richardson P."/>
            <person name="Mackenzie C."/>
            <person name="Choudhary M."/>
            <person name="Donohue T.J."/>
            <person name="Kaplan S."/>
        </authorList>
    </citation>
    <scope>NUCLEOTIDE SEQUENCE [LARGE SCALE GENOMIC DNA]</scope>
    <source>
        <strain>ATCC 17025 / ATH 2.4.3</strain>
    </source>
</reference>
<dbReference type="EC" id="4.1.1.39" evidence="1"/>
<dbReference type="EMBL" id="CP000663">
    <property type="protein sequence ID" value="ABP72915.1"/>
    <property type="molecule type" value="Genomic_DNA"/>
</dbReference>
<dbReference type="SMR" id="A4WZV1"/>
<dbReference type="KEGG" id="rsq:Rsph17025_4063"/>
<dbReference type="HOGENOM" id="CLU_031450_2_0_5"/>
<dbReference type="BioCyc" id="RSPH349102:G1G8M-4191-MONOMER"/>
<dbReference type="GO" id="GO:0000287">
    <property type="term" value="F:magnesium ion binding"/>
    <property type="evidence" value="ECO:0007669"/>
    <property type="project" value="UniProtKB-UniRule"/>
</dbReference>
<dbReference type="GO" id="GO:0004497">
    <property type="term" value="F:monooxygenase activity"/>
    <property type="evidence" value="ECO:0007669"/>
    <property type="project" value="UniProtKB-KW"/>
</dbReference>
<dbReference type="GO" id="GO:0016984">
    <property type="term" value="F:ribulose-bisphosphate carboxylase activity"/>
    <property type="evidence" value="ECO:0007669"/>
    <property type="project" value="UniProtKB-UniRule"/>
</dbReference>
<dbReference type="GO" id="GO:0019253">
    <property type="term" value="P:reductive pentose-phosphate cycle"/>
    <property type="evidence" value="ECO:0007669"/>
    <property type="project" value="UniProtKB-UniRule"/>
</dbReference>
<dbReference type="Gene3D" id="3.20.20.110">
    <property type="entry name" value="Ribulose bisphosphate carboxylase, large subunit, C-terminal domain"/>
    <property type="match status" value="1"/>
</dbReference>
<dbReference type="Gene3D" id="3.30.70.150">
    <property type="entry name" value="RuBisCO large subunit, N-terminal domain"/>
    <property type="match status" value="1"/>
</dbReference>
<dbReference type="HAMAP" id="MF_01338">
    <property type="entry name" value="RuBisCO_L_type1"/>
    <property type="match status" value="1"/>
</dbReference>
<dbReference type="InterPro" id="IPR033966">
    <property type="entry name" value="RuBisCO"/>
</dbReference>
<dbReference type="InterPro" id="IPR020878">
    <property type="entry name" value="RuBisCo_large_chain_AS"/>
</dbReference>
<dbReference type="InterPro" id="IPR000685">
    <property type="entry name" value="RuBisCO_lsu_C"/>
</dbReference>
<dbReference type="InterPro" id="IPR036376">
    <property type="entry name" value="RuBisCO_lsu_C_sf"/>
</dbReference>
<dbReference type="InterPro" id="IPR017443">
    <property type="entry name" value="RuBisCO_lsu_fd_N"/>
</dbReference>
<dbReference type="InterPro" id="IPR036422">
    <property type="entry name" value="RuBisCO_lsu_N_sf"/>
</dbReference>
<dbReference type="InterPro" id="IPR020888">
    <property type="entry name" value="RuBisCO_lsuI"/>
</dbReference>
<dbReference type="NCBIfam" id="NF003252">
    <property type="entry name" value="PRK04208.1"/>
    <property type="match status" value="1"/>
</dbReference>
<dbReference type="PANTHER" id="PTHR42704">
    <property type="entry name" value="RIBULOSE BISPHOSPHATE CARBOXYLASE"/>
    <property type="match status" value="1"/>
</dbReference>
<dbReference type="PANTHER" id="PTHR42704:SF17">
    <property type="entry name" value="RIBULOSE BISPHOSPHATE CARBOXYLASE LARGE CHAIN"/>
    <property type="match status" value="1"/>
</dbReference>
<dbReference type="Pfam" id="PF00016">
    <property type="entry name" value="RuBisCO_large"/>
    <property type="match status" value="1"/>
</dbReference>
<dbReference type="Pfam" id="PF02788">
    <property type="entry name" value="RuBisCO_large_N"/>
    <property type="match status" value="1"/>
</dbReference>
<dbReference type="SFLD" id="SFLDG01052">
    <property type="entry name" value="RuBisCO"/>
    <property type="match status" value="1"/>
</dbReference>
<dbReference type="SFLD" id="SFLDS00014">
    <property type="entry name" value="RuBisCO"/>
    <property type="match status" value="1"/>
</dbReference>
<dbReference type="SFLD" id="SFLDG00301">
    <property type="entry name" value="RuBisCO-like_proteins"/>
    <property type="match status" value="1"/>
</dbReference>
<dbReference type="SUPFAM" id="SSF51649">
    <property type="entry name" value="RuBisCo, C-terminal domain"/>
    <property type="match status" value="1"/>
</dbReference>
<dbReference type="SUPFAM" id="SSF54966">
    <property type="entry name" value="RuBisCO, large subunit, small (N-terminal) domain"/>
    <property type="match status" value="1"/>
</dbReference>
<dbReference type="PROSITE" id="PS00157">
    <property type="entry name" value="RUBISCO_LARGE"/>
    <property type="match status" value="1"/>
</dbReference>
<organism>
    <name type="scientific">Cereibacter sphaeroides (strain ATCC 17025 / ATH 2.4.3)</name>
    <name type="common">Rhodobacter sphaeroides</name>
    <dbReference type="NCBI Taxonomy" id="349102"/>
    <lineage>
        <taxon>Bacteria</taxon>
        <taxon>Pseudomonadati</taxon>
        <taxon>Pseudomonadota</taxon>
        <taxon>Alphaproteobacteria</taxon>
        <taxon>Rhodobacterales</taxon>
        <taxon>Paracoccaceae</taxon>
        <taxon>Cereibacter</taxon>
    </lineage>
</organism>
<comment type="function">
    <text evidence="1">RuBisCO catalyzes two reactions: the carboxylation of D-ribulose 1,5-bisphosphate, the primary event in carbon dioxide fixation, as well as the oxidative fragmentation of the pentose substrate. Both reactions occur simultaneously and in competition at the same active site.</text>
</comment>
<comment type="catalytic activity">
    <reaction evidence="1">
        <text>2 (2R)-3-phosphoglycerate + 2 H(+) = D-ribulose 1,5-bisphosphate + CO2 + H2O</text>
        <dbReference type="Rhea" id="RHEA:23124"/>
        <dbReference type="ChEBI" id="CHEBI:15377"/>
        <dbReference type="ChEBI" id="CHEBI:15378"/>
        <dbReference type="ChEBI" id="CHEBI:16526"/>
        <dbReference type="ChEBI" id="CHEBI:57870"/>
        <dbReference type="ChEBI" id="CHEBI:58272"/>
        <dbReference type="EC" id="4.1.1.39"/>
    </reaction>
</comment>
<comment type="catalytic activity">
    <reaction evidence="1">
        <text>D-ribulose 1,5-bisphosphate + O2 = 2-phosphoglycolate + (2R)-3-phosphoglycerate + 2 H(+)</text>
        <dbReference type="Rhea" id="RHEA:36631"/>
        <dbReference type="ChEBI" id="CHEBI:15378"/>
        <dbReference type="ChEBI" id="CHEBI:15379"/>
        <dbReference type="ChEBI" id="CHEBI:57870"/>
        <dbReference type="ChEBI" id="CHEBI:58033"/>
        <dbReference type="ChEBI" id="CHEBI:58272"/>
    </reaction>
</comment>
<comment type="cofactor">
    <cofactor evidence="1">
        <name>Mg(2+)</name>
        <dbReference type="ChEBI" id="CHEBI:18420"/>
    </cofactor>
    <text evidence="1">Binds 1 Mg(2+) ion per subunit.</text>
</comment>
<comment type="subunit">
    <text evidence="1">Heterohexadecamer of 8 large chains and 8 small chains.</text>
</comment>
<comment type="miscellaneous">
    <text evidence="1">The basic functional RuBisCO is composed of a large chain homodimer in a 'head-to-tail' conformation. In form I RuBisCO this homodimer is arranged in a barrel-like tetramer with the small subunits forming a tetrameric 'cap' on each end of the 'barrel'.</text>
</comment>
<comment type="similarity">
    <text evidence="1">Belongs to the RuBisCO large chain family. Type I subfamily.</text>
</comment>
<proteinExistence type="inferred from homology"/>
<keyword id="KW-0113">Calvin cycle</keyword>
<keyword id="KW-0120">Carbon dioxide fixation</keyword>
<keyword id="KW-0456">Lyase</keyword>
<keyword id="KW-0460">Magnesium</keyword>
<keyword id="KW-0479">Metal-binding</keyword>
<keyword id="KW-0503">Monooxygenase</keyword>
<keyword id="KW-0560">Oxidoreductase</keyword>
<keyword id="KW-0602">Photosynthesis</keyword>
<keyword id="KW-0614">Plasmid</keyword>
<sequence>MAAKTYDAGVKDYRSIYWEPQYQVKDSDILAVFKVVPQPGVSREEAAAAVAAESSTATWTTVWTDLLTDLDYYKGRAYAIEDVPGSDEAFYAFIAYPMDLFEEGSVVNVFTSLVGNVFGFKAVRALRLEDVRFPLWFVMTCPGAPHGMKVERDLLDKYGRPLLGCTIKPKLGLSAKNYGRAVYECLRGGLDFTKDDENVNSQPFLRWRDRFLFCQEAIEKAEAETGERKGHYMNVTAGTMEEIYERAEFAKEIGTPIIMSDYLTVGWSAHTSLSRWCRKNGMLLHVHRAMHAVMDRNPNHGINFRVLAKILRLMGGDHLHSGTVVGKLEGDREATIGWINLLRDRFIKADRSRGIFFDQDWGPQPGLFPVASGGIHVWHMPALVSIFGNDSVLQFGGGTLGHPWGNAAGACANRFALEACVQARNDGRNLEKEGKEILTKAAQTSPELRMAMETWKEVRFEFDTVDKLDVQHR</sequence>
<evidence type="ECO:0000255" key="1">
    <source>
        <dbReference type="HAMAP-Rule" id="MF_01338"/>
    </source>
</evidence>
<gene>
    <name evidence="1" type="primary">cbbL2</name>
    <name type="ordered locus">Rsph17025_4063</name>
</gene>
<accession>A4WZV1</accession>
<protein>
    <recommendedName>
        <fullName evidence="1">Ribulose bisphosphate carboxylase large chain 2</fullName>
        <shortName evidence="1">RuBisCO large subunit 2</shortName>
        <ecNumber evidence="1">4.1.1.39</ecNumber>
    </recommendedName>
</protein>